<sequence length="854" mass="91733">MALEQALQAARQGELDVLRSLHAAGLLGPSLRDPLDALPVHHAARAGKLHCLRFLVEEAALPAAARARNGATPAHDASATGHLACLQWLLSQGGCRVQDKDNSGATVLHLAARFGHPEVVNWLLHHGGGDPTAATDMGALPIHYAAAKGDFPSLRLLVEHYPEGVNAQTKNGATPLYLACQEGHLEVTQYLVQECGADPHARAHDGMTPLHAAAQMGHSPVIVWLVSCTDVSLSEQDKDGATAMHFAASRGHTKVLSWLLLHGGEISADLWGGTPLHDAAENGELECCQILVVNGAELDVRDRDGYTAADLSDFNGHSHCTRYLRTVENLSVEHRVLSRDPSAELEAKQPDSGMSSPNTTVSVQPLNFDLSSPTSTLSNYDSCSSSHSSIKGQHPPCGLSSARAADIQSYMDMLNPELGLPRGTIGKPTPPPPPPSFPPPPPPPGTQLPPPPPGYPAPKPPVGPQAADIYMQTKNKLRHVETEALKKELSSCDGHDGLRRQDSSRKPRAFSKQPSTGDYYRQLGRCPGETLAARPGMAHSEEVRARQPARAGCPRLGPAARGSLEGPSAPPQAALLPGNHVPNGCAADPKASRELPPPPPPPPPPLPEAASSPPPAPPLPLESAGPGCGQRRSSSSTGSTKSFNMMSPTGDNSELLAEIKAGKSLKPTPQSKGLTTVFSGIGQPAFQPDSPLPSVSPALSPVRSPTPPAAGFQPLLNGSLVPVPPTTPAPGVQLDVEALIPTHDEQGRPIPEWKRQVMVRKMQLKMQEEEEQRRKEEEEEARLASMPAWRRDLLRKKLEEEREQKRKEEERQKQEELRREKEQSEKLRTLGYDESKLAPWQRQVILKKGDIAKY</sequence>
<proteinExistence type="evidence at protein level"/>
<gene>
    <name type="primary">ESPN</name>
    <name type="synonym">DFNB36</name>
    <name type="ORF">LP2654</name>
</gene>
<feature type="chain" id="PRO_0000334666" description="Espin">
    <location>
        <begin position="1"/>
        <end position="854"/>
    </location>
</feature>
<feature type="repeat" description="ANK 1">
    <location>
        <begin position="1"/>
        <end position="31"/>
    </location>
</feature>
<feature type="repeat" description="ANK 2">
    <location>
        <begin position="35"/>
        <end position="64"/>
    </location>
</feature>
<feature type="repeat" description="ANK 3">
    <location>
        <begin position="69"/>
        <end position="99"/>
    </location>
</feature>
<feature type="repeat" description="ANK 4">
    <location>
        <begin position="103"/>
        <end position="133"/>
    </location>
</feature>
<feature type="repeat" description="ANK 5">
    <location>
        <begin position="137"/>
        <end position="167"/>
    </location>
</feature>
<feature type="repeat" description="ANK 6">
    <location>
        <begin position="171"/>
        <end position="201"/>
    </location>
</feature>
<feature type="repeat" description="ANK 7">
    <location>
        <begin position="205"/>
        <end position="235"/>
    </location>
</feature>
<feature type="repeat" description="ANK 8">
    <location>
        <begin position="239"/>
        <end position="268"/>
    </location>
</feature>
<feature type="repeat" description="ANK 9">
    <location>
        <begin position="271"/>
        <end position="300"/>
    </location>
</feature>
<feature type="domain" description="WH2" evidence="4">
    <location>
        <begin position="651"/>
        <end position="668"/>
    </location>
</feature>
<feature type="region of interest" description="Disordered" evidence="5">
    <location>
        <begin position="338"/>
        <end position="400"/>
    </location>
</feature>
<feature type="region of interest" description="Disordered" evidence="5">
    <location>
        <begin position="415"/>
        <end position="474"/>
    </location>
</feature>
<feature type="region of interest" description="Disordered" evidence="5">
    <location>
        <begin position="487"/>
        <end position="713"/>
    </location>
</feature>
<feature type="region of interest" description="Disordered" evidence="5">
    <location>
        <begin position="765"/>
        <end position="788"/>
    </location>
</feature>
<feature type="region of interest" description="Disordered" evidence="5">
    <location>
        <begin position="800"/>
        <end position="832"/>
    </location>
</feature>
<feature type="coiled-coil region" evidence="3">
    <location>
        <begin position="756"/>
        <end position="830"/>
    </location>
</feature>
<feature type="compositionally biased region" description="Basic and acidic residues" evidence="5">
    <location>
        <begin position="338"/>
        <end position="349"/>
    </location>
</feature>
<feature type="compositionally biased region" description="Polar residues" evidence="5">
    <location>
        <begin position="352"/>
        <end position="377"/>
    </location>
</feature>
<feature type="compositionally biased region" description="Low complexity" evidence="5">
    <location>
        <begin position="378"/>
        <end position="389"/>
    </location>
</feature>
<feature type="compositionally biased region" description="Pro residues" evidence="5">
    <location>
        <begin position="428"/>
        <end position="463"/>
    </location>
</feature>
<feature type="compositionally biased region" description="Basic and acidic residues" evidence="5">
    <location>
        <begin position="487"/>
        <end position="505"/>
    </location>
</feature>
<feature type="compositionally biased region" description="Pro residues" evidence="5">
    <location>
        <begin position="595"/>
        <end position="620"/>
    </location>
</feature>
<feature type="compositionally biased region" description="Low complexity" evidence="5">
    <location>
        <begin position="633"/>
        <end position="642"/>
    </location>
</feature>
<feature type="compositionally biased region" description="Polar residues" evidence="5">
    <location>
        <begin position="643"/>
        <end position="652"/>
    </location>
</feature>
<feature type="compositionally biased region" description="Polar residues" evidence="5">
    <location>
        <begin position="667"/>
        <end position="678"/>
    </location>
</feature>
<feature type="compositionally biased region" description="Low complexity" evidence="5">
    <location>
        <begin position="692"/>
        <end position="703"/>
    </location>
</feature>
<feature type="modified residue" description="Phosphoserine" evidence="1">
    <location>
        <position position="338"/>
    </location>
</feature>
<feature type="modified residue" description="Phosphoserine" evidence="2">
    <location>
        <position position="342"/>
    </location>
</feature>
<feature type="modified residue" description="Phosphoserine" evidence="1">
    <location>
        <position position="515"/>
    </location>
</feature>
<feature type="modified residue" description="Phosphoserine" evidence="2">
    <location>
        <position position="647"/>
    </location>
</feature>
<feature type="modified residue" description="Phosphoserine" evidence="2">
    <location>
        <position position="690"/>
    </location>
</feature>
<feature type="modified residue" description="Phosphoserine" evidence="1">
    <location>
        <position position="696"/>
    </location>
</feature>
<feature type="splice variant" id="VSP_033728" description="In isoform 2." evidence="10">
    <location>
        <begin position="1"/>
        <end position="536"/>
    </location>
</feature>
<feature type="splice variant" id="VSP_033729" description="In isoform 2." evidence="10">
    <location>
        <begin position="543"/>
        <end position="572"/>
    </location>
</feature>
<feature type="sequence variant" id="VAR_043451" description="In dbSNP:rs3817911.">
    <original>R</original>
    <variation>H</variation>
    <location>
        <position position="322"/>
    </location>
</feature>
<feature type="sequence variant" id="VAR_043452" description="In dbSNP:rs3817910.">
    <original>Y</original>
    <variation>C</variation>
    <location>
        <position position="323"/>
    </location>
</feature>
<feature type="sequence variant" id="VAR_043453" description="In DFNB36; irregular microvillar organization; dbSNP:rs121908134." evidence="7">
    <original>S</original>
    <variation>R</variation>
    <location>
        <position position="719"/>
    </location>
</feature>
<feature type="sequence variant" id="VAR_043454" description="In DFNB36; irregular microvillar organization; dbSNP:rs121908135." evidence="7">
    <original>D</original>
    <variation>N</variation>
    <location>
        <position position="744"/>
    </location>
</feature>
<feature type="sequence variant" id="VAR_043455" description="In DFNB36; uncertain significance; dbSNP:rs121908136." evidence="7">
    <original>R</original>
    <variation>Q</variation>
    <location>
        <position position="774"/>
    </location>
</feature>
<feature type="sequence variant" id="VAR_083335" description="In USH1M; results in impaired elongation of microvilli and stereocilia consistent with a loss of function in parallel actin filament bundle assembly; retains localization to microvilli and stereocilia." evidence="9">
    <location>
        <begin position="790"/>
        <end position="795"/>
    </location>
</feature>
<feature type="sequence variant" id="VAR_079505" description="In DFNB36." evidence="8">
    <location>
        <begin position="840"/>
        <end position="854"/>
    </location>
</feature>
<feature type="sequence variant" id="VAR_043456" description="In DFNB36; severe phenotype; severe impairment of microvillar elongation; espin is less efficiently targeted to the microvilli and accumulates in the nucleus; dbSNP:rs1569771486." evidence="7">
    <location>
        <position position="848"/>
    </location>
</feature>
<feature type="mutagenesis site" description="No effect on localization to microvilli. No effect on microvillar elongation." evidence="9">
    <original>RRDLLR</original>
    <variation>KKEIIK</variation>
    <location>
        <begin position="790"/>
        <end position="795"/>
    </location>
</feature>
<feature type="mutagenesis site" description="Loss of targeting to microvilli. Impaired microvillar elongation." evidence="9">
    <original>RRDLLR</original>
    <variation>SQSTTS</variation>
    <location>
        <begin position="790"/>
        <end position="795"/>
    </location>
</feature>
<feature type="sequence conflict" description="In Ref. 2; AAP34481." evidence="11" ref="2">
    <original>R</original>
    <variation>G</variation>
    <location>
        <position position="593"/>
    </location>
</feature>
<feature type="sequence conflict" description="In Ref. 1; CAB66814." evidence="11" ref="1">
    <original>P</original>
    <variation>L</variation>
    <location>
        <position position="597"/>
    </location>
</feature>
<feature type="sequence conflict" description="In Ref. 5; AAD24480." evidence="11" ref="5">
    <original>F</original>
    <variation>L</variation>
    <location>
        <position position="678"/>
    </location>
</feature>
<feature type="sequence conflict" description="In Ref. 5; AAD24480." evidence="11" ref="5">
    <original>RR</original>
    <variation>SW</variation>
    <location>
        <begin position="773"/>
        <end position="774"/>
    </location>
</feature>
<organism>
    <name type="scientific">Homo sapiens</name>
    <name type="common">Human</name>
    <dbReference type="NCBI Taxonomy" id="9606"/>
    <lineage>
        <taxon>Eukaryota</taxon>
        <taxon>Metazoa</taxon>
        <taxon>Chordata</taxon>
        <taxon>Craniata</taxon>
        <taxon>Vertebrata</taxon>
        <taxon>Euteleostomi</taxon>
        <taxon>Mammalia</taxon>
        <taxon>Eutheria</taxon>
        <taxon>Euarchontoglires</taxon>
        <taxon>Primates</taxon>
        <taxon>Haplorrhini</taxon>
        <taxon>Catarrhini</taxon>
        <taxon>Hominidae</taxon>
        <taxon>Homo</taxon>
    </lineage>
</organism>
<dbReference type="EMBL" id="AL136880">
    <property type="protein sequence ID" value="CAB66814.1"/>
    <property type="molecule type" value="mRNA"/>
</dbReference>
<dbReference type="EMBL" id="AY203958">
    <property type="protein sequence ID" value="AAP34481.1"/>
    <property type="molecule type" value="mRNA"/>
</dbReference>
<dbReference type="EMBL" id="AL031848">
    <property type="status" value="NOT_ANNOTATED_CDS"/>
    <property type="molecule type" value="Genomic_DNA"/>
</dbReference>
<dbReference type="EMBL" id="AL158217">
    <property type="status" value="NOT_ANNOTATED_CDS"/>
    <property type="molecule type" value="Genomic_DNA"/>
</dbReference>
<dbReference type="EMBL" id="CH471130">
    <property type="protein sequence ID" value="EAW71537.1"/>
    <property type="molecule type" value="Genomic_DNA"/>
</dbReference>
<dbReference type="EMBL" id="AF134401">
    <property type="protein sequence ID" value="AAD24480.1"/>
    <property type="molecule type" value="mRNA"/>
</dbReference>
<dbReference type="CCDS" id="CCDS70.1">
    <molecule id="B1AK53-1"/>
</dbReference>
<dbReference type="RefSeq" id="NP_113663.2">
    <molecule id="B1AK53-1"/>
    <property type="nucleotide sequence ID" value="NM_031475.3"/>
</dbReference>
<dbReference type="SMR" id="B1AK53"/>
<dbReference type="BioGRID" id="123738">
    <property type="interactions" value="20"/>
</dbReference>
<dbReference type="FunCoup" id="B1AK53">
    <property type="interactions" value="18"/>
</dbReference>
<dbReference type="IntAct" id="B1AK53">
    <property type="interactions" value="12"/>
</dbReference>
<dbReference type="STRING" id="9606.ENSP00000496593"/>
<dbReference type="GlyGen" id="B1AK53">
    <property type="glycosylation" value="3 sites"/>
</dbReference>
<dbReference type="iPTMnet" id="B1AK53"/>
<dbReference type="PhosphoSitePlus" id="B1AK53"/>
<dbReference type="BioMuta" id="ESPN"/>
<dbReference type="jPOST" id="B1AK53"/>
<dbReference type="MassIVE" id="B1AK53"/>
<dbReference type="PaxDb" id="9606-ENSP00000367059"/>
<dbReference type="PeptideAtlas" id="B1AK53"/>
<dbReference type="ProteomicsDB" id="3019">
    <molecule id="B1AK53-1"/>
</dbReference>
<dbReference type="ProteomicsDB" id="3020">
    <molecule id="B1AK53-2"/>
</dbReference>
<dbReference type="Pumba" id="B1AK53"/>
<dbReference type="Antibodypedia" id="27332">
    <property type="antibodies" value="85 antibodies from 24 providers"/>
</dbReference>
<dbReference type="DNASU" id="83715"/>
<dbReference type="Ensembl" id="ENST00000461727.6">
    <molecule id="B1AK53-2"/>
    <property type="protein sequence ID" value="ENSP00000465308.1"/>
    <property type="gene ID" value="ENSG00000187017.18"/>
</dbReference>
<dbReference type="Ensembl" id="ENST00000645284.1">
    <molecule id="B1AK53-1"/>
    <property type="protein sequence ID" value="ENSP00000496593.1"/>
    <property type="gene ID" value="ENSG00000187017.18"/>
</dbReference>
<dbReference type="GeneID" id="83715"/>
<dbReference type="KEGG" id="hsa:83715"/>
<dbReference type="MANE-Select" id="ENST00000645284.1">
    <property type="protein sequence ID" value="ENSP00000496593.1"/>
    <property type="RefSeq nucleotide sequence ID" value="NM_031475.3"/>
    <property type="RefSeq protein sequence ID" value="NP_113663.2"/>
</dbReference>
<dbReference type="UCSC" id="uc001amy.3">
    <molecule id="B1AK53-1"/>
    <property type="organism name" value="human"/>
</dbReference>
<dbReference type="AGR" id="HGNC:13281"/>
<dbReference type="CTD" id="83715"/>
<dbReference type="DisGeNET" id="83715"/>
<dbReference type="GeneCards" id="ESPN"/>
<dbReference type="GeneReviews" id="ESPN"/>
<dbReference type="HGNC" id="HGNC:13281">
    <property type="gene designation" value="ESPN"/>
</dbReference>
<dbReference type="HPA" id="ENSG00000187017">
    <property type="expression patterns" value="Tissue enhanced (liver, retina, testis)"/>
</dbReference>
<dbReference type="MalaCards" id="ESPN"/>
<dbReference type="MIM" id="606351">
    <property type="type" value="gene"/>
</dbReference>
<dbReference type="MIM" id="609006">
    <property type="type" value="phenotype"/>
</dbReference>
<dbReference type="MIM" id="618632">
    <property type="type" value="phenotype"/>
</dbReference>
<dbReference type="neXtProt" id="NX_B1AK53"/>
<dbReference type="OpenTargets" id="ENSG00000187017"/>
<dbReference type="Orphanet" id="90636">
    <property type="disease" value="Rare autosomal recessive non-syndromic sensorineural deafness type DFNB"/>
</dbReference>
<dbReference type="Orphanet" id="231169">
    <property type="disease" value="Usher syndrome type 1"/>
</dbReference>
<dbReference type="PharmGKB" id="PA27885"/>
<dbReference type="VEuPathDB" id="HostDB:ENSG00000187017"/>
<dbReference type="eggNOG" id="KOG0504">
    <property type="taxonomic scope" value="Eukaryota"/>
</dbReference>
<dbReference type="GeneTree" id="ENSGT00940000160408"/>
<dbReference type="HOGENOM" id="CLU_017441_0_0_1"/>
<dbReference type="InParanoid" id="B1AK53"/>
<dbReference type="OMA" id="RANDGMQ"/>
<dbReference type="OrthoDB" id="10261302at2759"/>
<dbReference type="PAN-GO" id="B1AK53">
    <property type="GO annotations" value="3 GO annotations based on evolutionary models"/>
</dbReference>
<dbReference type="PhylomeDB" id="B1AK53"/>
<dbReference type="TreeFam" id="TF326392"/>
<dbReference type="PathwayCommons" id="B1AK53"/>
<dbReference type="Reactome" id="R-HSA-9662360">
    <property type="pathway name" value="Sensory processing of sound by inner hair cells of the cochlea"/>
</dbReference>
<dbReference type="Reactome" id="R-HSA-9662361">
    <property type="pathway name" value="Sensory processing of sound by outer hair cells of the cochlea"/>
</dbReference>
<dbReference type="SignaLink" id="B1AK53"/>
<dbReference type="BioGRID-ORCS" id="83715">
    <property type="hits" value="114 hits in 1153 CRISPR screens"/>
</dbReference>
<dbReference type="ChiTaRS" id="ESPN">
    <property type="organism name" value="human"/>
</dbReference>
<dbReference type="GeneWiki" id="Espin_(protein)"/>
<dbReference type="GenomeRNAi" id="83715"/>
<dbReference type="Pharos" id="B1AK53">
    <property type="development level" value="Tbio"/>
</dbReference>
<dbReference type="PRO" id="PR:B1AK53"/>
<dbReference type="Proteomes" id="UP000005640">
    <property type="component" value="Chromosome 1"/>
</dbReference>
<dbReference type="RNAct" id="B1AK53">
    <property type="molecule type" value="protein"/>
</dbReference>
<dbReference type="Bgee" id="ENSG00000187017">
    <property type="expression patterns" value="Expressed in right testis and 139 other cell types or tissues"/>
</dbReference>
<dbReference type="ExpressionAtlas" id="B1AK53">
    <property type="expression patterns" value="baseline and differential"/>
</dbReference>
<dbReference type="GO" id="GO:0005903">
    <property type="term" value="C:brush border"/>
    <property type="evidence" value="ECO:0000250"/>
    <property type="project" value="UniProtKB"/>
</dbReference>
<dbReference type="GO" id="GO:0005737">
    <property type="term" value="C:cytoplasm"/>
    <property type="evidence" value="ECO:0000318"/>
    <property type="project" value="GO_Central"/>
</dbReference>
<dbReference type="GO" id="GO:0031941">
    <property type="term" value="C:filamentous actin"/>
    <property type="evidence" value="ECO:0000250"/>
    <property type="project" value="UniProtKB"/>
</dbReference>
<dbReference type="GO" id="GO:0005902">
    <property type="term" value="C:microvillus"/>
    <property type="evidence" value="ECO:0000314"/>
    <property type="project" value="UniProtKB"/>
</dbReference>
<dbReference type="GO" id="GO:0032420">
    <property type="term" value="C:stereocilium"/>
    <property type="evidence" value="ECO:0000314"/>
    <property type="project" value="UniProtKB"/>
</dbReference>
<dbReference type="GO" id="GO:0032426">
    <property type="term" value="C:stereocilium tip"/>
    <property type="evidence" value="ECO:0000250"/>
    <property type="project" value="UniProtKB"/>
</dbReference>
<dbReference type="GO" id="GO:0051015">
    <property type="term" value="F:actin filament binding"/>
    <property type="evidence" value="ECO:0000250"/>
    <property type="project" value="UniProtKB"/>
</dbReference>
<dbReference type="GO" id="GO:0017124">
    <property type="term" value="F:SH3 domain binding"/>
    <property type="evidence" value="ECO:0000250"/>
    <property type="project" value="UniProtKB"/>
</dbReference>
<dbReference type="GO" id="GO:0051017">
    <property type="term" value="P:actin filament bundle assembly"/>
    <property type="evidence" value="ECO:0000318"/>
    <property type="project" value="GO_Central"/>
</dbReference>
<dbReference type="GO" id="GO:0030034">
    <property type="term" value="P:microvillar actin bundle assembly"/>
    <property type="evidence" value="ECO:0000315"/>
    <property type="project" value="UniProtKB"/>
</dbReference>
<dbReference type="GO" id="GO:0007605">
    <property type="term" value="P:sensory perception of sound"/>
    <property type="evidence" value="ECO:0007669"/>
    <property type="project" value="UniProtKB-KW"/>
</dbReference>
<dbReference type="FunFam" id="1.25.40.20:FF:000174">
    <property type="entry name" value="Espin"/>
    <property type="match status" value="1"/>
</dbReference>
<dbReference type="Gene3D" id="1.25.40.20">
    <property type="entry name" value="Ankyrin repeat-containing domain"/>
    <property type="match status" value="1"/>
</dbReference>
<dbReference type="InterPro" id="IPR002110">
    <property type="entry name" value="Ankyrin_rpt"/>
</dbReference>
<dbReference type="InterPro" id="IPR036770">
    <property type="entry name" value="Ankyrin_rpt-contain_sf"/>
</dbReference>
<dbReference type="InterPro" id="IPR052420">
    <property type="entry name" value="Espin/Espin-like"/>
</dbReference>
<dbReference type="InterPro" id="IPR003124">
    <property type="entry name" value="WH2_dom"/>
</dbReference>
<dbReference type="PANTHER" id="PTHR24153">
    <property type="entry name" value="ESPIN"/>
    <property type="match status" value="1"/>
</dbReference>
<dbReference type="PANTHER" id="PTHR24153:SF14">
    <property type="entry name" value="ESPIN"/>
    <property type="match status" value="1"/>
</dbReference>
<dbReference type="Pfam" id="PF12796">
    <property type="entry name" value="Ank_2"/>
    <property type="match status" value="3"/>
</dbReference>
<dbReference type="Pfam" id="PF02205">
    <property type="entry name" value="WH2"/>
    <property type="match status" value="1"/>
</dbReference>
<dbReference type="PRINTS" id="PR01217">
    <property type="entry name" value="PRICHEXTENSN"/>
</dbReference>
<dbReference type="SMART" id="SM00248">
    <property type="entry name" value="ANK"/>
    <property type="match status" value="8"/>
</dbReference>
<dbReference type="SMART" id="SM00246">
    <property type="entry name" value="WH2"/>
    <property type="match status" value="1"/>
</dbReference>
<dbReference type="SUPFAM" id="SSF48403">
    <property type="entry name" value="Ankyrin repeat"/>
    <property type="match status" value="1"/>
</dbReference>
<dbReference type="PROSITE" id="PS50297">
    <property type="entry name" value="ANK_REP_REGION"/>
    <property type="match status" value="1"/>
</dbReference>
<dbReference type="PROSITE" id="PS50088">
    <property type="entry name" value="ANK_REPEAT"/>
    <property type="match status" value="6"/>
</dbReference>
<dbReference type="PROSITE" id="PS51082">
    <property type="entry name" value="WH2"/>
    <property type="match status" value="1"/>
</dbReference>
<evidence type="ECO:0000250" key="1">
    <source>
        <dbReference type="UniProtKB" id="Q63618"/>
    </source>
</evidence>
<evidence type="ECO:0000250" key="2">
    <source>
        <dbReference type="UniProtKB" id="Q9ET47"/>
    </source>
</evidence>
<evidence type="ECO:0000255" key="3"/>
<evidence type="ECO:0000255" key="4">
    <source>
        <dbReference type="PROSITE-ProRule" id="PRU00406"/>
    </source>
</evidence>
<evidence type="ECO:0000256" key="5">
    <source>
        <dbReference type="SAM" id="MobiDB-lite"/>
    </source>
</evidence>
<evidence type="ECO:0000269" key="6">
    <source>
    </source>
</evidence>
<evidence type="ECO:0000269" key="7">
    <source>
    </source>
</evidence>
<evidence type="ECO:0000269" key="8">
    <source>
    </source>
</evidence>
<evidence type="ECO:0000269" key="9">
    <source>
    </source>
</evidence>
<evidence type="ECO:0000303" key="10">
    <source>
    </source>
</evidence>
<evidence type="ECO:0000305" key="11"/>
<keyword id="KW-0009">Actin-binding</keyword>
<keyword id="KW-0025">Alternative splicing</keyword>
<keyword id="KW-0040">ANK repeat</keyword>
<keyword id="KW-0966">Cell projection</keyword>
<keyword id="KW-0175">Coiled coil</keyword>
<keyword id="KW-0963">Cytoplasm</keyword>
<keyword id="KW-0206">Cytoskeleton</keyword>
<keyword id="KW-0209">Deafness</keyword>
<keyword id="KW-0225">Disease variant</keyword>
<keyword id="KW-1009">Hearing</keyword>
<keyword id="KW-1010">Non-syndromic deafness</keyword>
<keyword id="KW-0597">Phosphoprotein</keyword>
<keyword id="KW-1267">Proteomics identification</keyword>
<keyword id="KW-1185">Reference proteome</keyword>
<keyword id="KW-0677">Repeat</keyword>
<keyword id="KW-0682">Retinitis pigmentosa</keyword>
<keyword id="KW-0836">Usher syndrome</keyword>
<protein>
    <recommendedName>
        <fullName>Espin</fullName>
    </recommendedName>
    <alternativeName>
        <fullName>Autosomal recessive deafness type 36 protein</fullName>
    </alternativeName>
    <alternativeName>
        <fullName>Ectoplasmic specialization protein</fullName>
    </alternativeName>
</protein>
<reference key="1">
    <citation type="journal article" date="2001" name="Genome Res.">
        <title>Towards a catalog of human genes and proteins: sequencing and analysis of 500 novel complete protein coding human cDNAs.</title>
        <authorList>
            <person name="Wiemann S."/>
            <person name="Weil B."/>
            <person name="Wellenreuther R."/>
            <person name="Gassenhuber J."/>
            <person name="Glassl S."/>
            <person name="Ansorge W."/>
            <person name="Boecher M."/>
            <person name="Bloecker H."/>
            <person name="Bauersachs S."/>
            <person name="Blum H."/>
            <person name="Lauber J."/>
            <person name="Duesterhoeft A."/>
            <person name="Beyer A."/>
            <person name="Koehrer K."/>
            <person name="Strack N."/>
            <person name="Mewes H.-W."/>
            <person name="Ottenwaelder B."/>
            <person name="Obermaier B."/>
            <person name="Tampe J."/>
            <person name="Heubner D."/>
            <person name="Wambutt R."/>
            <person name="Korn B."/>
            <person name="Klein M."/>
            <person name="Poustka A."/>
        </authorList>
    </citation>
    <scope>NUCLEOTIDE SEQUENCE [LARGE SCALE MRNA] (ISOFORM 1)</scope>
</reference>
<reference key="2">
    <citation type="journal article" date="2004" name="Proc. Natl. Acad. Sci. U.S.A.">
        <title>Large-scale cDNA transfection screening for genes related to cancer development and progression.</title>
        <authorList>
            <person name="Wan D."/>
            <person name="Gong Y."/>
            <person name="Qin W."/>
            <person name="Zhang P."/>
            <person name="Li J."/>
            <person name="Wei L."/>
            <person name="Zhou X."/>
            <person name="Li H."/>
            <person name="Qiu X."/>
            <person name="Zhong F."/>
            <person name="He L."/>
            <person name="Yu J."/>
            <person name="Yao G."/>
            <person name="Jiang H."/>
            <person name="Qian L."/>
            <person name="Yu Y."/>
            <person name="Shu H."/>
            <person name="Chen X."/>
            <person name="Xu H."/>
            <person name="Guo M."/>
            <person name="Pan Z."/>
            <person name="Chen Y."/>
            <person name="Ge C."/>
            <person name="Yang S."/>
            <person name="Gu J."/>
        </authorList>
    </citation>
    <scope>NUCLEOTIDE SEQUENCE [LARGE SCALE MRNA] (ISOFORM 2)</scope>
</reference>
<reference key="3">
    <citation type="journal article" date="2006" name="Nature">
        <title>The DNA sequence and biological annotation of human chromosome 1.</title>
        <authorList>
            <person name="Gregory S.G."/>
            <person name="Barlow K.F."/>
            <person name="McLay K.E."/>
            <person name="Kaul R."/>
            <person name="Swarbreck D."/>
            <person name="Dunham A."/>
            <person name="Scott C.E."/>
            <person name="Howe K.L."/>
            <person name="Woodfine K."/>
            <person name="Spencer C.C.A."/>
            <person name="Jones M.C."/>
            <person name="Gillson C."/>
            <person name="Searle S."/>
            <person name="Zhou Y."/>
            <person name="Kokocinski F."/>
            <person name="McDonald L."/>
            <person name="Evans R."/>
            <person name="Phillips K."/>
            <person name="Atkinson A."/>
            <person name="Cooper R."/>
            <person name="Jones C."/>
            <person name="Hall R.E."/>
            <person name="Andrews T.D."/>
            <person name="Lloyd C."/>
            <person name="Ainscough R."/>
            <person name="Almeida J.P."/>
            <person name="Ambrose K.D."/>
            <person name="Anderson F."/>
            <person name="Andrew R.W."/>
            <person name="Ashwell R.I.S."/>
            <person name="Aubin K."/>
            <person name="Babbage A.K."/>
            <person name="Bagguley C.L."/>
            <person name="Bailey J."/>
            <person name="Beasley H."/>
            <person name="Bethel G."/>
            <person name="Bird C.P."/>
            <person name="Bray-Allen S."/>
            <person name="Brown J.Y."/>
            <person name="Brown A.J."/>
            <person name="Buckley D."/>
            <person name="Burton J."/>
            <person name="Bye J."/>
            <person name="Carder C."/>
            <person name="Chapman J.C."/>
            <person name="Clark S.Y."/>
            <person name="Clarke G."/>
            <person name="Clee C."/>
            <person name="Cobley V."/>
            <person name="Collier R.E."/>
            <person name="Corby N."/>
            <person name="Coville G.J."/>
            <person name="Davies J."/>
            <person name="Deadman R."/>
            <person name="Dunn M."/>
            <person name="Earthrowl M."/>
            <person name="Ellington A.G."/>
            <person name="Errington H."/>
            <person name="Frankish A."/>
            <person name="Frankland J."/>
            <person name="French L."/>
            <person name="Garner P."/>
            <person name="Garnett J."/>
            <person name="Gay L."/>
            <person name="Ghori M.R.J."/>
            <person name="Gibson R."/>
            <person name="Gilby L.M."/>
            <person name="Gillett W."/>
            <person name="Glithero R.J."/>
            <person name="Grafham D.V."/>
            <person name="Griffiths C."/>
            <person name="Griffiths-Jones S."/>
            <person name="Grocock R."/>
            <person name="Hammond S."/>
            <person name="Harrison E.S.I."/>
            <person name="Hart E."/>
            <person name="Haugen E."/>
            <person name="Heath P.D."/>
            <person name="Holmes S."/>
            <person name="Holt K."/>
            <person name="Howden P.J."/>
            <person name="Hunt A.R."/>
            <person name="Hunt S.E."/>
            <person name="Hunter G."/>
            <person name="Isherwood J."/>
            <person name="James R."/>
            <person name="Johnson C."/>
            <person name="Johnson D."/>
            <person name="Joy A."/>
            <person name="Kay M."/>
            <person name="Kershaw J.K."/>
            <person name="Kibukawa M."/>
            <person name="Kimberley A.M."/>
            <person name="King A."/>
            <person name="Knights A.J."/>
            <person name="Lad H."/>
            <person name="Laird G."/>
            <person name="Lawlor S."/>
            <person name="Leongamornlert D.A."/>
            <person name="Lloyd D.M."/>
            <person name="Loveland J."/>
            <person name="Lovell J."/>
            <person name="Lush M.J."/>
            <person name="Lyne R."/>
            <person name="Martin S."/>
            <person name="Mashreghi-Mohammadi M."/>
            <person name="Matthews L."/>
            <person name="Matthews N.S.W."/>
            <person name="McLaren S."/>
            <person name="Milne S."/>
            <person name="Mistry S."/>
            <person name="Moore M.J.F."/>
            <person name="Nickerson T."/>
            <person name="O'Dell C.N."/>
            <person name="Oliver K."/>
            <person name="Palmeiri A."/>
            <person name="Palmer S.A."/>
            <person name="Parker A."/>
            <person name="Patel D."/>
            <person name="Pearce A.V."/>
            <person name="Peck A.I."/>
            <person name="Pelan S."/>
            <person name="Phelps K."/>
            <person name="Phillimore B.J."/>
            <person name="Plumb R."/>
            <person name="Rajan J."/>
            <person name="Raymond C."/>
            <person name="Rouse G."/>
            <person name="Saenphimmachak C."/>
            <person name="Sehra H.K."/>
            <person name="Sheridan E."/>
            <person name="Shownkeen R."/>
            <person name="Sims S."/>
            <person name="Skuce C.D."/>
            <person name="Smith M."/>
            <person name="Steward C."/>
            <person name="Subramanian S."/>
            <person name="Sycamore N."/>
            <person name="Tracey A."/>
            <person name="Tromans A."/>
            <person name="Van Helmond Z."/>
            <person name="Wall M."/>
            <person name="Wallis J.M."/>
            <person name="White S."/>
            <person name="Whitehead S.L."/>
            <person name="Wilkinson J.E."/>
            <person name="Willey D.L."/>
            <person name="Williams H."/>
            <person name="Wilming L."/>
            <person name="Wray P.W."/>
            <person name="Wu Z."/>
            <person name="Coulson A."/>
            <person name="Vaudin M."/>
            <person name="Sulston J.E."/>
            <person name="Durbin R.M."/>
            <person name="Hubbard T."/>
            <person name="Wooster R."/>
            <person name="Dunham I."/>
            <person name="Carter N.P."/>
            <person name="McVean G."/>
            <person name="Ross M.T."/>
            <person name="Harrow J."/>
            <person name="Olson M.V."/>
            <person name="Beck S."/>
            <person name="Rogers J."/>
            <person name="Bentley D.R."/>
        </authorList>
    </citation>
    <scope>NUCLEOTIDE SEQUENCE [LARGE SCALE GENOMIC DNA]</scope>
</reference>
<reference key="4">
    <citation type="submission" date="2005-07" db="EMBL/GenBank/DDBJ databases">
        <authorList>
            <person name="Mural R.J."/>
            <person name="Istrail S."/>
            <person name="Sutton G.G."/>
            <person name="Florea L."/>
            <person name="Halpern A.L."/>
            <person name="Mobarry C.M."/>
            <person name="Lippert R."/>
            <person name="Walenz B."/>
            <person name="Shatkay H."/>
            <person name="Dew I."/>
            <person name="Miller J.R."/>
            <person name="Flanigan M.J."/>
            <person name="Edwards N.J."/>
            <person name="Bolanos R."/>
            <person name="Fasulo D."/>
            <person name="Halldorsson B.V."/>
            <person name="Hannenhalli S."/>
            <person name="Turner R."/>
            <person name="Yooseph S."/>
            <person name="Lu F."/>
            <person name="Nusskern D.R."/>
            <person name="Shue B.C."/>
            <person name="Zheng X.H."/>
            <person name="Zhong F."/>
            <person name="Delcher A.L."/>
            <person name="Huson D.H."/>
            <person name="Kravitz S.A."/>
            <person name="Mouchard L."/>
            <person name="Reinert K."/>
            <person name="Remington K.A."/>
            <person name="Clark A.G."/>
            <person name="Waterman M.S."/>
            <person name="Eichler E.E."/>
            <person name="Adams M.D."/>
            <person name="Hunkapiller M.W."/>
            <person name="Myers E.W."/>
            <person name="Venter J.C."/>
        </authorList>
    </citation>
    <scope>NUCLEOTIDE SEQUENCE [LARGE SCALE GENOMIC DNA]</scope>
</reference>
<reference key="5">
    <citation type="submission" date="1999-03" db="EMBL/GenBank/DDBJ databases">
        <title>Organization and chromosomal location of the espin gene in the human.</title>
        <authorList>
            <person name="Bartles J.R."/>
            <person name="Zheng L."/>
            <person name="Li A."/>
            <person name="Wang M."/>
        </authorList>
    </citation>
    <scope>NUCLEOTIDE SEQUENCE [MRNA] OF 663-854</scope>
    <source>
        <tissue>Testis</tissue>
    </source>
</reference>
<reference key="6">
    <citation type="journal article" date="2004" name="J. Med. Genet.">
        <title>Mutations of ESPN cause autosomal recessive deafness and vestibular dysfunction.</title>
        <authorList>
            <person name="Naz S."/>
            <person name="Griffith A.J."/>
            <person name="Riazuddin S."/>
            <person name="Hampton L.L."/>
            <person name="Battey J.F. Jr."/>
            <person name="Khan S.N."/>
            <person name="Riazuddin S."/>
            <person name="Wilcox E.R."/>
            <person name="Friedman T.B."/>
        </authorList>
    </citation>
    <scope>INVOLVEMENT IN DFNB36</scope>
</reference>
<reference key="7">
    <citation type="journal article" date="2006" name="J. Med. Genet.">
        <title>Espin gene (ESPN) mutations associated with autosomal dominant hearing loss cause defects in microvillar elongation or organisation.</title>
        <authorList>
            <person name="Donaudy F."/>
            <person name="Zheng L."/>
            <person name="Ficarella R."/>
            <person name="Ballana E."/>
            <person name="Carella M."/>
            <person name="Melchionda S."/>
            <person name="Estivill X."/>
            <person name="Bartles J.R."/>
            <person name="Gasparini P."/>
        </authorList>
    </citation>
    <scope>VARIANTS DFNB36 ARG-719; ASN-744; GLN-774 AND LYS-848 DEL</scope>
    <scope>CHARACTERIZATION OF VARIANTS DFNB36 ARG-719; ASN-744 AND LYS-848 DEL</scope>
</reference>
<reference key="8">
    <citation type="journal article" date="2017" name="Genet. Test. Mol. Biomarkers">
        <title>Molecular Analysis of Twelve Pakistani Families with Nonsyndromic or Syndromic Hearing Loss.</title>
        <authorList>
            <person name="Wang R."/>
            <person name="Han S."/>
            <person name="Khan A."/>
            <person name="Zhang X."/>
        </authorList>
    </citation>
    <scope>VARIANT DFNB36 840-TRP--TYR-854 DEL</scope>
</reference>
<reference key="9">
    <citation type="journal article" date="2018" name="J. Med. Genet.">
        <title>Inframe deletion of human ESPN is associated with deafness, vestibulopathy and vision impairment.</title>
        <authorList>
            <person name="Ahmed Z.M."/>
            <person name="Jaworek T.J."/>
            <person name="Sarangdhar G.N."/>
            <person name="Zheng L."/>
            <person name="Gul K."/>
            <person name="Khan S.N."/>
            <person name="Friedman T.B."/>
            <person name="Sisk R.A."/>
            <person name="Bartles J.R."/>
            <person name="Riazuddin S."/>
            <person name="Riazuddin S."/>
        </authorList>
    </citation>
    <scope>VARIANT USH1M 790-ARG--ARG-795 DEL</scope>
    <scope>INVOLVEMENT IN USH1M</scope>
    <scope>FUNCTION</scope>
    <scope>SUBCELLULAR LOCATION</scope>
    <scope>CHARACTERIZATION OF VARIANT USH1M 790-ARG--ARG-795 DEL</scope>
    <scope>MUTAGENESIS OF 790-ARG--ARG-795</scope>
</reference>
<comment type="function">
    <text evidence="2 9">Multifunctional actin-bundling protein. Plays a major role in regulating the organization, dimension, dynamics and signaling capacities of the actin filament-rich microvilli in the mechanosensory and chemosensory cells (PubMed:29572253). Required for the assembly and stabilization of the stereociliary parallel actin bundles. Plays a crucial role in the formation and maintenance of inner ear hair cell stereocilia (By similarity). Involved in the elongation of actin in stereocilia (PubMed:29572253). In extrastriolar hair cells, required for targeting MYO3B to stereocilia tips, and for regulation of stereocilia diameter and staircase formation.</text>
</comment>
<comment type="subunit">
    <text evidence="2">Monomer. Binds F-actin in a Ca(2+)-resistant fashion. Interacts (via N-terminus) with BAIAP2 (via SH3-domain). Interacts with PFN2. Interacts with MYO3A (via C-terminus). Interacts with MYO3B (via C-terminus).</text>
</comment>
<comment type="subcellular location">
    <subcellularLocation>
        <location evidence="2">Cytoplasm</location>
        <location evidence="2">Cytoskeleton</location>
    </subcellularLocation>
    <subcellularLocation>
        <location evidence="9">Cell projection</location>
        <location evidence="9">Stereocilium</location>
    </subcellularLocation>
    <subcellularLocation>
        <location evidence="9">Cell projection</location>
        <location evidence="9">Microvillus</location>
    </subcellularLocation>
</comment>
<comment type="alternative products">
    <event type="alternative splicing"/>
    <isoform>
        <id>B1AK53-1</id>
        <name>1</name>
        <sequence type="displayed"/>
    </isoform>
    <isoform>
        <id>B1AK53-2</id>
        <name>2</name>
        <sequence type="described" ref="VSP_033728 VSP_033729"/>
    </isoform>
</comment>
<comment type="domain">
    <text evidence="2">The WH2-domain binds actin monomer and mediates actin bundle assembly.</text>
</comment>
<comment type="disease" evidence="6 7 8">
    <disease id="DI-00873">
        <name>Deafness, autosomal recessive, 36, with or without vestibular involvement</name>
        <acronym>DFNB36</acronym>
        <description>A form of non-syndromic sensorineural hearing loss. Sensorineural deafness results from damage to the neural receptors of the inner ear, the nerve pathways to the brain, or the area of the brain that receives sound information. DFNB36 is characterized by prelingual, profound hearing loss, and vestibular areflexia in some patients.</description>
        <dbReference type="MIM" id="609006"/>
    </disease>
    <text>The disease is caused by variants affecting the gene represented in this entry.</text>
</comment>
<comment type="disease" evidence="9">
    <disease id="DI-05680">
        <name>Usher syndrome 1M</name>
        <acronym>USH1M</acronym>
        <description>A form of Usher syndrome, a genetically heterogeneous condition characterized by the association of retinitis pigmentosa with sensorineural deafness. Age at onset and differences in auditory and vestibular function distinguish Usher syndrome type 1 (USH1), Usher syndrome type 2 (USH2) and Usher syndrome type 3 (USH3). USH1M is an autosomal recessive disease characterized by prelingual sensorineural hearing loss, vestibular dysfunction, night blindness, and progressive impairment of vision.</description>
        <dbReference type="MIM" id="618632"/>
    </disease>
    <text>The disease may be caused by variants affecting the gene represented in this entry.</text>
</comment>
<name>ESPN_HUMAN</name>
<accession>B1AK53</accession>
<accession>Q6XYB2</accession>
<accession>Q9H0A2</accession>
<accession>Q9Y329</accession>